<keyword id="KW-0255">Endonuclease</keyword>
<keyword id="KW-0378">Hydrolase</keyword>
<keyword id="KW-0479">Metal-binding</keyword>
<keyword id="KW-0540">Nuclease</keyword>
<keyword id="KW-0819">tRNA processing</keyword>
<keyword id="KW-0862">Zinc</keyword>
<proteinExistence type="inferred from homology"/>
<evidence type="ECO:0000255" key="1">
    <source>
        <dbReference type="HAMAP-Rule" id="MF_01818"/>
    </source>
</evidence>
<dbReference type="EC" id="3.1.26.11" evidence="1"/>
<dbReference type="EMBL" id="CP000993">
    <property type="protein sequence ID" value="ACH94976.1"/>
    <property type="molecule type" value="Genomic_DNA"/>
</dbReference>
<dbReference type="RefSeq" id="WP_012539138.1">
    <property type="nucleotide sequence ID" value="NC_011244.1"/>
</dbReference>
<dbReference type="SMR" id="B5RQ92"/>
<dbReference type="KEGG" id="bre:BRE_762"/>
<dbReference type="HOGENOM" id="CLU_031317_2_1_12"/>
<dbReference type="Proteomes" id="UP000000612">
    <property type="component" value="Chromosome"/>
</dbReference>
<dbReference type="GO" id="GO:0042781">
    <property type="term" value="F:3'-tRNA processing endoribonuclease activity"/>
    <property type="evidence" value="ECO:0007669"/>
    <property type="project" value="UniProtKB-UniRule"/>
</dbReference>
<dbReference type="GO" id="GO:0008270">
    <property type="term" value="F:zinc ion binding"/>
    <property type="evidence" value="ECO:0007669"/>
    <property type="project" value="UniProtKB-UniRule"/>
</dbReference>
<dbReference type="CDD" id="cd07717">
    <property type="entry name" value="RNaseZ_ZiPD-like_MBL-fold"/>
    <property type="match status" value="1"/>
</dbReference>
<dbReference type="Gene3D" id="3.60.15.10">
    <property type="entry name" value="Ribonuclease Z/Hydroxyacylglutathione hydrolase-like"/>
    <property type="match status" value="1"/>
</dbReference>
<dbReference type="HAMAP" id="MF_01818">
    <property type="entry name" value="RNase_Z_BN"/>
    <property type="match status" value="1"/>
</dbReference>
<dbReference type="InterPro" id="IPR001279">
    <property type="entry name" value="Metallo-B-lactamas"/>
</dbReference>
<dbReference type="InterPro" id="IPR036866">
    <property type="entry name" value="RibonucZ/Hydroxyglut_hydro"/>
</dbReference>
<dbReference type="InterPro" id="IPR013471">
    <property type="entry name" value="RNase_Z/BN"/>
</dbReference>
<dbReference type="NCBIfam" id="NF000801">
    <property type="entry name" value="PRK00055.1-3"/>
    <property type="match status" value="1"/>
</dbReference>
<dbReference type="NCBIfam" id="TIGR02651">
    <property type="entry name" value="RNase_Z"/>
    <property type="match status" value="1"/>
</dbReference>
<dbReference type="PANTHER" id="PTHR46018">
    <property type="entry name" value="ZINC PHOSPHODIESTERASE ELAC PROTEIN 1"/>
    <property type="match status" value="1"/>
</dbReference>
<dbReference type="PANTHER" id="PTHR46018:SF2">
    <property type="entry name" value="ZINC PHOSPHODIESTERASE ELAC PROTEIN 1"/>
    <property type="match status" value="1"/>
</dbReference>
<dbReference type="Pfam" id="PF00753">
    <property type="entry name" value="Lactamase_B"/>
    <property type="match status" value="1"/>
</dbReference>
<dbReference type="Pfam" id="PF12706">
    <property type="entry name" value="Lactamase_B_2"/>
    <property type="match status" value="1"/>
</dbReference>
<dbReference type="SMART" id="SM00849">
    <property type="entry name" value="Lactamase_B"/>
    <property type="match status" value="1"/>
</dbReference>
<dbReference type="SUPFAM" id="SSF56281">
    <property type="entry name" value="Metallo-hydrolase/oxidoreductase"/>
    <property type="match status" value="1"/>
</dbReference>
<organism>
    <name type="scientific">Borrelia recurrentis (strain A1)</name>
    <dbReference type="NCBI Taxonomy" id="412418"/>
    <lineage>
        <taxon>Bacteria</taxon>
        <taxon>Pseudomonadati</taxon>
        <taxon>Spirochaetota</taxon>
        <taxon>Spirochaetia</taxon>
        <taxon>Spirochaetales</taxon>
        <taxon>Borreliaceae</taxon>
        <taxon>Borrelia</taxon>
    </lineage>
</organism>
<name>RNZ_BORRA</name>
<sequence>MNFNINILGTGGTRPLHNRYLTSVLIEYHGESILFDCGEATQMSLRKQKISWQKIKMICITHLHADHITGLLGIVMLMAQSGDTRKEPLTIIGPIGIKKYLETNIELLRVHKNYQIIYKEIIINKTEPVLYEDKRKRIEYIKLKHSIDCIGYLFIEKDKPGKFDTQKAESLNIPKGPIRKKLQEGYEVILNGRKIVPSEILGEIKKGLKFAYITDTAYFEELSTYIQNFNLVIIESTFKDDLKEEAKKKLHLTAKLAAQITKKAKVYQTGLIHFSERYTLNKDLYELLNEAQQEYPNGNIFLAKDGMKLKANKDKFIIK</sequence>
<accession>B5RQ92</accession>
<gene>
    <name evidence="1" type="primary">rnz</name>
    <name type="ordered locus">BRE_762</name>
</gene>
<feature type="chain" id="PRO_1000187940" description="Ribonuclease Z">
    <location>
        <begin position="1"/>
        <end position="319"/>
    </location>
</feature>
<feature type="active site" description="Proton acceptor" evidence="1">
    <location>
        <position position="66"/>
    </location>
</feature>
<feature type="binding site" evidence="1">
    <location>
        <position position="62"/>
    </location>
    <ligand>
        <name>Zn(2+)</name>
        <dbReference type="ChEBI" id="CHEBI:29105"/>
        <label>1</label>
        <note>catalytic</note>
    </ligand>
</feature>
<feature type="binding site" evidence="1">
    <location>
        <position position="64"/>
    </location>
    <ligand>
        <name>Zn(2+)</name>
        <dbReference type="ChEBI" id="CHEBI:29105"/>
        <label>1</label>
        <note>catalytic</note>
    </ligand>
</feature>
<feature type="binding site" evidence="1">
    <location>
        <position position="66"/>
    </location>
    <ligand>
        <name>Zn(2+)</name>
        <dbReference type="ChEBI" id="CHEBI:29105"/>
        <label>2</label>
        <note>catalytic</note>
    </ligand>
</feature>
<feature type="binding site" evidence="1">
    <location>
        <position position="67"/>
    </location>
    <ligand>
        <name>Zn(2+)</name>
        <dbReference type="ChEBI" id="CHEBI:29105"/>
        <label>2</label>
        <note>catalytic</note>
    </ligand>
</feature>
<feature type="binding site" evidence="1">
    <location>
        <position position="145"/>
    </location>
    <ligand>
        <name>Zn(2+)</name>
        <dbReference type="ChEBI" id="CHEBI:29105"/>
        <label>1</label>
        <note>catalytic</note>
    </ligand>
</feature>
<feature type="binding site" evidence="1">
    <location>
        <position position="215"/>
    </location>
    <ligand>
        <name>Zn(2+)</name>
        <dbReference type="ChEBI" id="CHEBI:29105"/>
        <label>1</label>
        <note>catalytic</note>
    </ligand>
</feature>
<feature type="binding site" evidence="1">
    <location>
        <position position="215"/>
    </location>
    <ligand>
        <name>Zn(2+)</name>
        <dbReference type="ChEBI" id="CHEBI:29105"/>
        <label>2</label>
        <note>catalytic</note>
    </ligand>
</feature>
<feature type="binding site" evidence="1">
    <location>
        <position position="273"/>
    </location>
    <ligand>
        <name>Zn(2+)</name>
        <dbReference type="ChEBI" id="CHEBI:29105"/>
        <label>2</label>
        <note>catalytic</note>
    </ligand>
</feature>
<reference key="1">
    <citation type="journal article" date="2008" name="PLoS Genet.">
        <title>The genome of Borrelia recurrentis, the agent of deadly louse-borne relapsing fever, is a degraded subset of tick-borne Borrelia duttonii.</title>
        <authorList>
            <person name="Lescot M."/>
            <person name="Audic S."/>
            <person name="Robert C."/>
            <person name="Nguyen T.T."/>
            <person name="Blanc G."/>
            <person name="Cutler S.J."/>
            <person name="Wincker P."/>
            <person name="Couloux A."/>
            <person name="Claverie J.-M."/>
            <person name="Raoult D."/>
            <person name="Drancourt M."/>
        </authorList>
    </citation>
    <scope>NUCLEOTIDE SEQUENCE [LARGE SCALE GENOMIC DNA]</scope>
    <source>
        <strain>A1</strain>
    </source>
</reference>
<protein>
    <recommendedName>
        <fullName evidence="1">Ribonuclease Z</fullName>
        <shortName evidence="1">RNase Z</shortName>
        <ecNumber evidence="1">3.1.26.11</ecNumber>
    </recommendedName>
    <alternativeName>
        <fullName evidence="1">tRNA 3 endonuclease</fullName>
    </alternativeName>
    <alternativeName>
        <fullName evidence="1">tRNase Z</fullName>
    </alternativeName>
</protein>
<comment type="function">
    <text evidence="1">Zinc phosphodiesterase, which displays some tRNA 3'-processing endonuclease activity. Probably involved in tRNA maturation, by removing a 3'-trailer from precursor tRNA.</text>
</comment>
<comment type="catalytic activity">
    <reaction evidence="1">
        <text>Endonucleolytic cleavage of RNA, removing extra 3' nucleotides from tRNA precursor, generating 3' termini of tRNAs. A 3'-hydroxy group is left at the tRNA terminus and a 5'-phosphoryl group is left at the trailer molecule.</text>
        <dbReference type="EC" id="3.1.26.11"/>
    </reaction>
</comment>
<comment type="cofactor">
    <cofactor evidence="1">
        <name>Zn(2+)</name>
        <dbReference type="ChEBI" id="CHEBI:29105"/>
    </cofactor>
    <text evidence="1">Binds 2 Zn(2+) ions.</text>
</comment>
<comment type="subunit">
    <text evidence="1">Homodimer.</text>
</comment>
<comment type="similarity">
    <text evidence="1">Belongs to the RNase Z family.</text>
</comment>